<protein>
    <recommendedName>
        <fullName evidence="1">Large ribosomal subunit protein uL13</fullName>
    </recommendedName>
    <alternativeName>
        <fullName evidence="3">50S ribosomal protein L13</fullName>
    </alternativeName>
</protein>
<dbReference type="EMBL" id="CP000159">
    <property type="protein sequence ID" value="ABC44147.1"/>
    <property type="status" value="ALT_INIT"/>
    <property type="molecule type" value="Genomic_DNA"/>
</dbReference>
<dbReference type="RefSeq" id="WP_112902658.1">
    <property type="nucleotide sequence ID" value="NC_007677.1"/>
</dbReference>
<dbReference type="RefSeq" id="YP_444193.1">
    <property type="nucleotide sequence ID" value="NC_007677.1"/>
</dbReference>
<dbReference type="SMR" id="Q2S6I8"/>
<dbReference type="STRING" id="309807.SRU_0038"/>
<dbReference type="EnsemblBacteria" id="ABC44147">
    <property type="protein sequence ID" value="ABC44147"/>
    <property type="gene ID" value="SRU_0038"/>
</dbReference>
<dbReference type="KEGG" id="sru:SRU_0038"/>
<dbReference type="PATRIC" id="fig|309807.25.peg.36"/>
<dbReference type="eggNOG" id="COG0102">
    <property type="taxonomic scope" value="Bacteria"/>
</dbReference>
<dbReference type="HOGENOM" id="CLU_082184_2_2_10"/>
<dbReference type="OrthoDB" id="9801330at2"/>
<dbReference type="Proteomes" id="UP000008674">
    <property type="component" value="Chromosome"/>
</dbReference>
<dbReference type="GO" id="GO:0022625">
    <property type="term" value="C:cytosolic large ribosomal subunit"/>
    <property type="evidence" value="ECO:0007669"/>
    <property type="project" value="TreeGrafter"/>
</dbReference>
<dbReference type="GO" id="GO:0003729">
    <property type="term" value="F:mRNA binding"/>
    <property type="evidence" value="ECO:0007669"/>
    <property type="project" value="TreeGrafter"/>
</dbReference>
<dbReference type="GO" id="GO:0003735">
    <property type="term" value="F:structural constituent of ribosome"/>
    <property type="evidence" value="ECO:0007669"/>
    <property type="project" value="InterPro"/>
</dbReference>
<dbReference type="GO" id="GO:0017148">
    <property type="term" value="P:negative regulation of translation"/>
    <property type="evidence" value="ECO:0007669"/>
    <property type="project" value="TreeGrafter"/>
</dbReference>
<dbReference type="GO" id="GO:0006412">
    <property type="term" value="P:translation"/>
    <property type="evidence" value="ECO:0007669"/>
    <property type="project" value="UniProtKB-UniRule"/>
</dbReference>
<dbReference type="CDD" id="cd00392">
    <property type="entry name" value="Ribosomal_L13"/>
    <property type="match status" value="1"/>
</dbReference>
<dbReference type="FunFam" id="3.90.1180.10:FF:000001">
    <property type="entry name" value="50S ribosomal protein L13"/>
    <property type="match status" value="1"/>
</dbReference>
<dbReference type="Gene3D" id="3.90.1180.10">
    <property type="entry name" value="Ribosomal protein L13"/>
    <property type="match status" value="1"/>
</dbReference>
<dbReference type="HAMAP" id="MF_01366">
    <property type="entry name" value="Ribosomal_uL13"/>
    <property type="match status" value="1"/>
</dbReference>
<dbReference type="InterPro" id="IPR005822">
    <property type="entry name" value="Ribosomal_uL13"/>
</dbReference>
<dbReference type="InterPro" id="IPR005823">
    <property type="entry name" value="Ribosomal_uL13_bac-type"/>
</dbReference>
<dbReference type="InterPro" id="IPR036899">
    <property type="entry name" value="Ribosomal_uL13_sf"/>
</dbReference>
<dbReference type="NCBIfam" id="TIGR01066">
    <property type="entry name" value="rplM_bact"/>
    <property type="match status" value="1"/>
</dbReference>
<dbReference type="PANTHER" id="PTHR11545:SF2">
    <property type="entry name" value="LARGE RIBOSOMAL SUBUNIT PROTEIN UL13M"/>
    <property type="match status" value="1"/>
</dbReference>
<dbReference type="PANTHER" id="PTHR11545">
    <property type="entry name" value="RIBOSOMAL PROTEIN L13"/>
    <property type="match status" value="1"/>
</dbReference>
<dbReference type="Pfam" id="PF00572">
    <property type="entry name" value="Ribosomal_L13"/>
    <property type="match status" value="1"/>
</dbReference>
<dbReference type="PIRSF" id="PIRSF002181">
    <property type="entry name" value="Ribosomal_L13"/>
    <property type="match status" value="1"/>
</dbReference>
<dbReference type="SUPFAM" id="SSF52161">
    <property type="entry name" value="Ribosomal protein L13"/>
    <property type="match status" value="1"/>
</dbReference>
<comment type="function">
    <text evidence="1">This protein is one of the early assembly proteins of the 50S ribosomal subunit, although it is not seen to bind rRNA by itself. It is important during the early stages of 50S assembly.</text>
</comment>
<comment type="subunit">
    <text evidence="1">Part of the 50S ribosomal subunit.</text>
</comment>
<comment type="similarity">
    <text evidence="1">Belongs to the universal ribosomal protein uL13 family.</text>
</comment>
<comment type="sequence caution" evidence="3">
    <conflict type="erroneous initiation">
        <sequence resource="EMBL-CDS" id="ABC44147"/>
    </conflict>
</comment>
<accession>Q2S6I8</accession>
<name>RL13_SALRD</name>
<sequence>MDTQSFKTFNAKPDEVERDWYVVDATNQVVGRLASQIARVLRGKHKPTFTPHVDTGDYVIVVNADKARFTGKKEKQKEYHEYSGYPGGDHSHSPEEMRADKPTYIIREAVEGMLPTGPLGRDTFKKLKVYAGPDHPHEAQQPEPLDNA</sequence>
<proteinExistence type="inferred from homology"/>
<evidence type="ECO:0000255" key="1">
    <source>
        <dbReference type="HAMAP-Rule" id="MF_01366"/>
    </source>
</evidence>
<evidence type="ECO:0000256" key="2">
    <source>
        <dbReference type="SAM" id="MobiDB-lite"/>
    </source>
</evidence>
<evidence type="ECO:0000305" key="3"/>
<reference key="1">
    <citation type="journal article" date="2005" name="Proc. Natl. Acad. Sci. U.S.A.">
        <title>The genome of Salinibacter ruber: convergence and gene exchange among hyperhalophilic bacteria and archaea.</title>
        <authorList>
            <person name="Mongodin E.F."/>
            <person name="Nelson K.E."/>
            <person name="Daugherty S."/>
            <person name="DeBoy R.T."/>
            <person name="Wister J."/>
            <person name="Khouri H."/>
            <person name="Weidman J."/>
            <person name="Walsh D.A."/>
            <person name="Papke R.T."/>
            <person name="Sanchez Perez G."/>
            <person name="Sharma A.K."/>
            <person name="Nesbo C.L."/>
            <person name="MacLeod D."/>
            <person name="Bapteste E."/>
            <person name="Doolittle W.F."/>
            <person name="Charlebois R.L."/>
            <person name="Legault B."/>
            <person name="Rodriguez-Valera F."/>
        </authorList>
    </citation>
    <scope>NUCLEOTIDE SEQUENCE [LARGE SCALE GENOMIC DNA]</scope>
    <source>
        <strain>DSM 13855 / CECT 5946 / M31</strain>
    </source>
</reference>
<keyword id="KW-1185">Reference proteome</keyword>
<keyword id="KW-0687">Ribonucleoprotein</keyword>
<keyword id="KW-0689">Ribosomal protein</keyword>
<organism>
    <name type="scientific">Salinibacter ruber (strain DSM 13855 / M31)</name>
    <dbReference type="NCBI Taxonomy" id="309807"/>
    <lineage>
        <taxon>Bacteria</taxon>
        <taxon>Pseudomonadati</taxon>
        <taxon>Rhodothermota</taxon>
        <taxon>Rhodothermia</taxon>
        <taxon>Rhodothermales</taxon>
        <taxon>Salinibacteraceae</taxon>
        <taxon>Salinibacter</taxon>
    </lineage>
</organism>
<feature type="chain" id="PRO_0000261790" description="Large ribosomal subunit protein uL13">
    <location>
        <begin position="1"/>
        <end position="148"/>
    </location>
</feature>
<feature type="region of interest" description="Disordered" evidence="2">
    <location>
        <begin position="71"/>
        <end position="99"/>
    </location>
</feature>
<feature type="region of interest" description="Disordered" evidence="2">
    <location>
        <begin position="125"/>
        <end position="148"/>
    </location>
</feature>
<feature type="compositionally biased region" description="Basic and acidic residues" evidence="2">
    <location>
        <begin position="71"/>
        <end position="81"/>
    </location>
</feature>
<feature type="compositionally biased region" description="Basic and acidic residues" evidence="2">
    <location>
        <begin position="89"/>
        <end position="99"/>
    </location>
</feature>
<gene>
    <name evidence="1" type="primary">rplM</name>
    <name type="ordered locus">SRU_0038</name>
</gene>